<name>RPIA_VIBPA</name>
<reference key="1">
    <citation type="journal article" date="2003" name="Lancet">
        <title>Genome sequence of Vibrio parahaemolyticus: a pathogenic mechanism distinct from that of V. cholerae.</title>
        <authorList>
            <person name="Makino K."/>
            <person name="Oshima K."/>
            <person name="Kurokawa K."/>
            <person name="Yokoyama K."/>
            <person name="Uda T."/>
            <person name="Tagomori K."/>
            <person name="Iijima Y."/>
            <person name="Najima M."/>
            <person name="Nakano M."/>
            <person name="Yamashita A."/>
            <person name="Kubota Y."/>
            <person name="Kimura S."/>
            <person name="Yasunaga T."/>
            <person name="Honda T."/>
            <person name="Shinagawa H."/>
            <person name="Hattori M."/>
            <person name="Iida T."/>
        </authorList>
    </citation>
    <scope>NUCLEOTIDE SEQUENCE [LARGE SCALE GENOMIC DNA]</scope>
    <source>
        <strain>RIMD 2210633</strain>
    </source>
</reference>
<accession>Q87LL9</accession>
<gene>
    <name evidence="1" type="primary">rpiA</name>
    <name type="ordered locus">VP2592</name>
</gene>
<comment type="function">
    <text evidence="1">Catalyzes the reversible conversion of ribose-5-phosphate to ribulose 5-phosphate.</text>
</comment>
<comment type="catalytic activity">
    <reaction evidence="1">
        <text>aldehydo-D-ribose 5-phosphate = D-ribulose 5-phosphate</text>
        <dbReference type="Rhea" id="RHEA:14657"/>
        <dbReference type="ChEBI" id="CHEBI:58121"/>
        <dbReference type="ChEBI" id="CHEBI:58273"/>
        <dbReference type="EC" id="5.3.1.6"/>
    </reaction>
</comment>
<comment type="pathway">
    <text evidence="1">Carbohydrate degradation; pentose phosphate pathway; D-ribose 5-phosphate from D-ribulose 5-phosphate (non-oxidative stage): step 1/1.</text>
</comment>
<comment type="subunit">
    <text evidence="1">Homodimer.</text>
</comment>
<comment type="similarity">
    <text evidence="1">Belongs to the ribose 5-phosphate isomerase family.</text>
</comment>
<organism>
    <name type="scientific">Vibrio parahaemolyticus serotype O3:K6 (strain RIMD 2210633)</name>
    <dbReference type="NCBI Taxonomy" id="223926"/>
    <lineage>
        <taxon>Bacteria</taxon>
        <taxon>Pseudomonadati</taxon>
        <taxon>Pseudomonadota</taxon>
        <taxon>Gammaproteobacteria</taxon>
        <taxon>Vibrionales</taxon>
        <taxon>Vibrionaceae</taxon>
        <taxon>Vibrio</taxon>
    </lineage>
</organism>
<dbReference type="EC" id="5.3.1.6" evidence="1"/>
<dbReference type="EMBL" id="BA000031">
    <property type="protein sequence ID" value="BAC60855.1"/>
    <property type="molecule type" value="Genomic_DNA"/>
</dbReference>
<dbReference type="RefSeq" id="NP_798971.1">
    <property type="nucleotide sequence ID" value="NC_004603.1"/>
</dbReference>
<dbReference type="RefSeq" id="WP_005482455.1">
    <property type="nucleotide sequence ID" value="NC_004603.1"/>
</dbReference>
<dbReference type="SMR" id="Q87LL9"/>
<dbReference type="GeneID" id="1190116"/>
<dbReference type="KEGG" id="vpa:VP2592"/>
<dbReference type="PATRIC" id="fig|223926.6.peg.2488"/>
<dbReference type="eggNOG" id="COG0120">
    <property type="taxonomic scope" value="Bacteria"/>
</dbReference>
<dbReference type="HOGENOM" id="CLU_056590_1_1_6"/>
<dbReference type="UniPathway" id="UPA00115">
    <property type="reaction ID" value="UER00412"/>
</dbReference>
<dbReference type="Proteomes" id="UP000002493">
    <property type="component" value="Chromosome 1"/>
</dbReference>
<dbReference type="GO" id="GO:0005829">
    <property type="term" value="C:cytosol"/>
    <property type="evidence" value="ECO:0007669"/>
    <property type="project" value="TreeGrafter"/>
</dbReference>
<dbReference type="GO" id="GO:0004751">
    <property type="term" value="F:ribose-5-phosphate isomerase activity"/>
    <property type="evidence" value="ECO:0007669"/>
    <property type="project" value="UniProtKB-UniRule"/>
</dbReference>
<dbReference type="GO" id="GO:0006014">
    <property type="term" value="P:D-ribose metabolic process"/>
    <property type="evidence" value="ECO:0007669"/>
    <property type="project" value="TreeGrafter"/>
</dbReference>
<dbReference type="GO" id="GO:0009052">
    <property type="term" value="P:pentose-phosphate shunt, non-oxidative branch"/>
    <property type="evidence" value="ECO:0007669"/>
    <property type="project" value="UniProtKB-UniRule"/>
</dbReference>
<dbReference type="CDD" id="cd01398">
    <property type="entry name" value="RPI_A"/>
    <property type="match status" value="1"/>
</dbReference>
<dbReference type="FunFam" id="3.30.70.260:FF:000004">
    <property type="entry name" value="Ribose-5-phosphate isomerase A"/>
    <property type="match status" value="1"/>
</dbReference>
<dbReference type="FunFam" id="3.40.50.1360:FF:000001">
    <property type="entry name" value="Ribose-5-phosphate isomerase A"/>
    <property type="match status" value="1"/>
</dbReference>
<dbReference type="Gene3D" id="3.30.70.260">
    <property type="match status" value="1"/>
</dbReference>
<dbReference type="Gene3D" id="3.40.50.1360">
    <property type="match status" value="1"/>
</dbReference>
<dbReference type="HAMAP" id="MF_00170">
    <property type="entry name" value="Rib_5P_isom_A"/>
    <property type="match status" value="1"/>
</dbReference>
<dbReference type="InterPro" id="IPR037171">
    <property type="entry name" value="NagB/RpiA_transferase-like"/>
</dbReference>
<dbReference type="InterPro" id="IPR020672">
    <property type="entry name" value="Ribose5P_isomerase_typA_subgr"/>
</dbReference>
<dbReference type="InterPro" id="IPR004788">
    <property type="entry name" value="Ribose5P_isomerase_type_A"/>
</dbReference>
<dbReference type="NCBIfam" id="NF001924">
    <property type="entry name" value="PRK00702.1"/>
    <property type="match status" value="1"/>
</dbReference>
<dbReference type="NCBIfam" id="TIGR00021">
    <property type="entry name" value="rpiA"/>
    <property type="match status" value="1"/>
</dbReference>
<dbReference type="PANTHER" id="PTHR11934">
    <property type="entry name" value="RIBOSE-5-PHOSPHATE ISOMERASE"/>
    <property type="match status" value="1"/>
</dbReference>
<dbReference type="PANTHER" id="PTHR11934:SF0">
    <property type="entry name" value="RIBOSE-5-PHOSPHATE ISOMERASE"/>
    <property type="match status" value="1"/>
</dbReference>
<dbReference type="Pfam" id="PF06026">
    <property type="entry name" value="Rib_5-P_isom_A"/>
    <property type="match status" value="1"/>
</dbReference>
<dbReference type="SUPFAM" id="SSF75445">
    <property type="entry name" value="D-ribose-5-phosphate isomerase (RpiA), lid domain"/>
    <property type="match status" value="1"/>
</dbReference>
<dbReference type="SUPFAM" id="SSF100950">
    <property type="entry name" value="NagB/RpiA/CoA transferase-like"/>
    <property type="match status" value="1"/>
</dbReference>
<proteinExistence type="inferred from homology"/>
<protein>
    <recommendedName>
        <fullName evidence="1">Ribose-5-phosphate isomerase A</fullName>
        <ecNumber evidence="1">5.3.1.6</ecNumber>
    </recommendedName>
    <alternativeName>
        <fullName evidence="1">Phosphoriboisomerase A</fullName>
        <shortName evidence="1">PRI</shortName>
    </alternativeName>
</protein>
<keyword id="KW-0413">Isomerase</keyword>
<feature type="chain" id="PRO_0000158492" description="Ribose-5-phosphate isomerase A">
    <location>
        <begin position="1"/>
        <end position="218"/>
    </location>
</feature>
<feature type="active site" description="Proton acceptor" evidence="1">
    <location>
        <position position="103"/>
    </location>
</feature>
<feature type="binding site" evidence="1">
    <location>
        <begin position="28"/>
        <end position="31"/>
    </location>
    <ligand>
        <name>substrate</name>
    </ligand>
</feature>
<feature type="binding site" evidence="1">
    <location>
        <begin position="81"/>
        <end position="84"/>
    </location>
    <ligand>
        <name>substrate</name>
    </ligand>
</feature>
<feature type="binding site" evidence="1">
    <location>
        <begin position="94"/>
        <end position="97"/>
    </location>
    <ligand>
        <name>substrate</name>
    </ligand>
</feature>
<feature type="binding site" evidence="1">
    <location>
        <position position="121"/>
    </location>
    <ligand>
        <name>substrate</name>
    </ligand>
</feature>
<evidence type="ECO:0000255" key="1">
    <source>
        <dbReference type="HAMAP-Rule" id="MF_00170"/>
    </source>
</evidence>
<sequence>MTQDEMKKAAGWAALKYVEKGSIVGVGTGSTVNHFIDALGTIKDDIKGAVSSSVASTERLKELGIEVFECNDVIKLDVYVDGADEINHAREMIKGGGAALTREKIVAAISEKFVCIVDDTKAVDVLGQFPLPVEVIPMARSYVARELVKLGGDPAYREGVVTDNGNIILDVHNMQITNPKEMEDKINGIAGVVTVGLFAHRGADVVITGTPEGAKIEE</sequence>